<organism>
    <name type="scientific">Malassezia globosa (strain ATCC MYA-4612 / CBS 7966)</name>
    <name type="common">Dandruff-associated fungus</name>
    <dbReference type="NCBI Taxonomy" id="425265"/>
    <lineage>
        <taxon>Eukaryota</taxon>
        <taxon>Fungi</taxon>
        <taxon>Dikarya</taxon>
        <taxon>Basidiomycota</taxon>
        <taxon>Ustilaginomycotina</taxon>
        <taxon>Malasseziomycetes</taxon>
        <taxon>Malasseziales</taxon>
        <taxon>Malasseziaceae</taxon>
        <taxon>Malassezia</taxon>
    </lineage>
</organism>
<comment type="function">
    <text evidence="1">Has a dual role in the assembly of mitochondrial ATPase. Acts as a protease that removes N-terminal residues of mitochondrial ATPase CF(0) subunit 6 at the intermembrane space side. Also involved in the correct assembly of the membrane-embedded ATPase CF(0) particle, probably mediating association of subunit 6 with the subunit 9 ring (By similarity).</text>
</comment>
<comment type="subcellular location">
    <subcellularLocation>
        <location>Mitochondrion inner membrane</location>
        <topology>Peripheral membrane protein</topology>
        <orientation>Intermembrane side</orientation>
    </subcellularLocation>
    <text evidence="1">Associates loosely with the inner membrane.</text>
</comment>
<comment type="similarity">
    <text evidence="3">Belongs to the peptidase M76 family.</text>
</comment>
<feature type="chain" id="PRO_0000341596" description="Mitochondrial inner membrane protease ATP23">
    <location>
        <begin position="1"/>
        <end position="246"/>
    </location>
</feature>
<feature type="active site" evidence="2">
    <location>
        <position position="145"/>
    </location>
</feature>
<feature type="binding site" evidence="1">
    <location>
        <position position="144"/>
    </location>
    <ligand>
        <name>a divalent metal cation</name>
        <dbReference type="ChEBI" id="CHEBI:60240"/>
        <note>catalytic</note>
    </ligand>
</feature>
<feature type="binding site" evidence="1">
    <location>
        <position position="148"/>
    </location>
    <ligand>
        <name>a divalent metal cation</name>
        <dbReference type="ChEBI" id="CHEBI:60240"/>
        <note>catalytic</note>
    </ligand>
</feature>
<proteinExistence type="inferred from homology"/>
<sequence length="246" mass="28158">MTDDTADPFVVRWLTWCSQALQSHKYPIRSLVDVSSPLSPDTETREDVIARGRCEQWKEDLLRTSPMVRFMVKHLTLIQCNPLSPREDSASQGTPPKLLIASCPPDIAGGFSPSPPERPTAESGILLCANRIFSKAHLEDTISHEMIHWWDHCRFKVDWGNLRHHACSEIRAASLSGDCNWTREINRRHFALSKQHQNCVKRRGILSVRGNPACKSEEMAMKVVEDVWDSCFHDTRPFDEYEFDSI</sequence>
<dbReference type="EC" id="3.4.24.-"/>
<dbReference type="EMBL" id="AAYY01000014">
    <property type="protein sequence ID" value="EDP41895.1"/>
    <property type="molecule type" value="Genomic_DNA"/>
</dbReference>
<dbReference type="RefSeq" id="XP_001729109.1">
    <property type="nucleotide sequence ID" value="XM_001729057.1"/>
</dbReference>
<dbReference type="FunCoup" id="A8QA10">
    <property type="interactions" value="330"/>
</dbReference>
<dbReference type="STRING" id="425265.A8QA10"/>
<dbReference type="MEROPS" id="M76.002"/>
<dbReference type="GeneID" id="5853607"/>
<dbReference type="KEGG" id="mgl:MGL_3576"/>
<dbReference type="VEuPathDB" id="FungiDB:MGL_3576"/>
<dbReference type="InParanoid" id="A8QA10"/>
<dbReference type="OMA" id="EAHQNCV"/>
<dbReference type="OrthoDB" id="285308at2759"/>
<dbReference type="Proteomes" id="UP000008837">
    <property type="component" value="Unassembled WGS sequence"/>
</dbReference>
<dbReference type="GO" id="GO:0005743">
    <property type="term" value="C:mitochondrial inner membrane"/>
    <property type="evidence" value="ECO:0007669"/>
    <property type="project" value="UniProtKB-SubCell"/>
</dbReference>
<dbReference type="GO" id="GO:0046872">
    <property type="term" value="F:metal ion binding"/>
    <property type="evidence" value="ECO:0007669"/>
    <property type="project" value="UniProtKB-KW"/>
</dbReference>
<dbReference type="GO" id="GO:0004222">
    <property type="term" value="F:metalloendopeptidase activity"/>
    <property type="evidence" value="ECO:0007669"/>
    <property type="project" value="InterPro"/>
</dbReference>
<dbReference type="GO" id="GO:0034982">
    <property type="term" value="P:mitochondrial protein processing"/>
    <property type="evidence" value="ECO:0007669"/>
    <property type="project" value="TreeGrafter"/>
</dbReference>
<dbReference type="GO" id="GO:0033615">
    <property type="term" value="P:mitochondrial proton-transporting ATP synthase complex assembly"/>
    <property type="evidence" value="ECO:0007669"/>
    <property type="project" value="TreeGrafter"/>
</dbReference>
<dbReference type="InterPro" id="IPR019165">
    <property type="entry name" value="Peptidase_M76_ATP23"/>
</dbReference>
<dbReference type="PANTHER" id="PTHR21711">
    <property type="entry name" value="MITOCHONDRIAL INNER MEMBRANE PROTEASE"/>
    <property type="match status" value="1"/>
</dbReference>
<dbReference type="PANTHER" id="PTHR21711:SF0">
    <property type="entry name" value="MITOCHONDRIAL INNER MEMBRANE PROTEASE ATP23 HOMOLOG"/>
    <property type="match status" value="1"/>
</dbReference>
<dbReference type="Pfam" id="PF09768">
    <property type="entry name" value="Peptidase_M76"/>
    <property type="match status" value="1"/>
</dbReference>
<dbReference type="PROSITE" id="PS00142">
    <property type="entry name" value="ZINC_PROTEASE"/>
    <property type="match status" value="1"/>
</dbReference>
<keyword id="KW-0378">Hydrolase</keyword>
<keyword id="KW-0472">Membrane</keyword>
<keyword id="KW-0479">Metal-binding</keyword>
<keyword id="KW-0482">Metalloprotease</keyword>
<keyword id="KW-0496">Mitochondrion</keyword>
<keyword id="KW-0999">Mitochondrion inner membrane</keyword>
<keyword id="KW-0645">Protease</keyword>
<keyword id="KW-1185">Reference proteome</keyword>
<reference key="1">
    <citation type="journal article" date="2007" name="Proc. Natl. Acad. Sci. U.S.A.">
        <title>Dandruff-associated Malassezia genomes reveal convergent and divergent virulence traits shared with plant and human fungal pathogens.</title>
        <authorList>
            <person name="Xu J."/>
            <person name="Saunders C.W."/>
            <person name="Hu P."/>
            <person name="Grant R.A."/>
            <person name="Boekhout T."/>
            <person name="Kuramae E.E."/>
            <person name="Kronstad J.W."/>
            <person name="DeAngelis Y.M."/>
            <person name="Reeder N.L."/>
            <person name="Johnstone K.R."/>
            <person name="Leland M."/>
            <person name="Fieno A.M."/>
            <person name="Begley W.M."/>
            <person name="Sun Y."/>
            <person name="Lacey M.P."/>
            <person name="Chaudhary T."/>
            <person name="Keough T."/>
            <person name="Chu L."/>
            <person name="Sears R."/>
            <person name="Yuan B."/>
            <person name="Dawson T.L. Jr."/>
        </authorList>
    </citation>
    <scope>NUCLEOTIDE SEQUENCE [LARGE SCALE GENOMIC DNA]</scope>
    <source>
        <strain>ATCC MYA-4612 / CBS 7966</strain>
    </source>
</reference>
<name>ATP23_MALGO</name>
<protein>
    <recommendedName>
        <fullName>Mitochondrial inner membrane protease ATP23</fullName>
        <ecNumber>3.4.24.-</ecNumber>
    </recommendedName>
</protein>
<evidence type="ECO:0000250" key="1"/>
<evidence type="ECO:0000255" key="2">
    <source>
        <dbReference type="PROSITE-ProRule" id="PRU10095"/>
    </source>
</evidence>
<evidence type="ECO:0000305" key="3"/>
<gene>
    <name type="primary">ATP23</name>
    <name type="ORF">MGL_3576</name>
</gene>
<accession>A8QA10</accession>